<organism evidence="11">
    <name type="scientific">Danio rerio</name>
    <name type="common">Zebrafish</name>
    <name type="synonym">Brachydanio rerio</name>
    <dbReference type="NCBI Taxonomy" id="7955"/>
    <lineage>
        <taxon>Eukaryota</taxon>
        <taxon>Metazoa</taxon>
        <taxon>Chordata</taxon>
        <taxon>Craniata</taxon>
        <taxon>Vertebrata</taxon>
        <taxon>Euteleostomi</taxon>
        <taxon>Actinopterygii</taxon>
        <taxon>Neopterygii</taxon>
        <taxon>Teleostei</taxon>
        <taxon>Ostariophysi</taxon>
        <taxon>Cypriniformes</taxon>
        <taxon>Danionidae</taxon>
        <taxon>Danioninae</taxon>
        <taxon>Danio</taxon>
    </lineage>
</organism>
<keyword id="KW-0106">Calcium</keyword>
<keyword id="KW-0966">Cell projection</keyword>
<keyword id="KW-0963">Cytoplasm</keyword>
<keyword id="KW-0206">Cytoskeleton</keyword>
<keyword id="KW-1015">Disulfide bond</keyword>
<keyword id="KW-0245">EGF-like domain</keyword>
<keyword id="KW-0272">Extracellular matrix</keyword>
<keyword id="KW-0325">Glycoprotein</keyword>
<keyword id="KW-1185">Reference proteome</keyword>
<keyword id="KW-0677">Repeat</keyword>
<keyword id="KW-0964">Secreted</keyword>
<keyword id="KW-0716">Sensory transduction</keyword>
<keyword id="KW-0732">Signal</keyword>
<keyword id="KW-0844">Vision</keyword>
<comment type="function">
    <text evidence="6 7 8">Required to maintain the integrity of photoreceptor cells (PubMed:27737822, PubMed:28378834, PubMed:30052645). Specifically required for normal morphology of the photoreceptor ciliary pocket, and might thus facilitate protein trafficking between the photoreceptor inner and outer segments via the transition zone (PubMed:27737822).</text>
</comment>
<comment type="subcellular location">
    <subcellularLocation>
        <location evidence="6 8">Cell projection</location>
        <location evidence="6 8">Cilium</location>
    </subcellularLocation>
    <subcellularLocation>
        <location evidence="1">Cytoplasm</location>
        <location evidence="1">Cytoskeleton</location>
        <location evidence="1">Cilium axoneme</location>
    </subcellularLocation>
    <subcellularLocation>
        <location evidence="1">Secreted</location>
        <location evidence="1">Extracellular space</location>
        <location evidence="1">Extracellular matrix</location>
        <location evidence="1">Interphotoreceptor matrix</location>
    </subcellularLocation>
    <text evidence="1 6 8">Localizes to discrete puncta at, or adjacent to, the photoreceptor connecting cilium (PubMed:27737822, PubMed:30052645). May localize to the cilium axoneme (By similarity). May also be expressed in the interphotoreceptor extracellular matrix (By similarity). Unlike the primate ortholog, does not appear to be expressed in the photoreceptor outer segment (PubMed:27737822).</text>
</comment>
<comment type="tissue specificity">
    <text evidence="6 8">Expressed in retina where it localizes between the retinal pigment epithelium and the outer nuclear layer (at protein level).</text>
</comment>
<comment type="disruption phenotype">
    <text evidence="6">Progressive loss of cone photoreceptors in the retina from two months post-fertilization (mpf) onwards, with almost complete loss by 9 mpf. Rod photoreceptors also show signs of degeneration in older animals of 14 mpf. Photoreceptor degeneration is accompanied by increased apoptosis and mislocalization of outer segment proteins. At the ultrastructural level, morphology of the photoreceptor ciliary pocket is frequently abnormal with either complete collapse of the pocket, or presence of multiple membranous vesicles.</text>
</comment>
<comment type="similarity">
    <text evidence="10">Belongs to the EYS family.</text>
</comment>
<proteinExistence type="evidence at protein level"/>
<evidence type="ECO:0000250" key="1">
    <source>
        <dbReference type="UniProtKB" id="A0A2K5V015"/>
    </source>
</evidence>
<evidence type="ECO:0000255" key="2"/>
<evidence type="ECO:0000255" key="3">
    <source>
        <dbReference type="PROSITE-ProRule" id="PRU00076"/>
    </source>
</evidence>
<evidence type="ECO:0000255" key="4">
    <source>
        <dbReference type="PROSITE-ProRule" id="PRU00122"/>
    </source>
</evidence>
<evidence type="ECO:0000255" key="5">
    <source>
        <dbReference type="PROSITE-ProRule" id="PRU00498"/>
    </source>
</evidence>
<evidence type="ECO:0000269" key="6">
    <source>
    </source>
</evidence>
<evidence type="ECO:0000269" key="7">
    <source>
    </source>
</evidence>
<evidence type="ECO:0000269" key="8">
    <source>
    </source>
</evidence>
<evidence type="ECO:0000303" key="9">
    <source>
    </source>
</evidence>
<evidence type="ECO:0000305" key="10"/>
<evidence type="ECO:0000312" key="11">
    <source>
        <dbReference type="Proteomes" id="UP000000437"/>
    </source>
</evidence>
<dbReference type="EMBL" id="BX005106">
    <property type="status" value="NOT_ANNOTATED_CDS"/>
    <property type="molecule type" value="Genomic_DNA"/>
</dbReference>
<dbReference type="EMBL" id="BX323836">
    <property type="status" value="NOT_ANNOTATED_CDS"/>
    <property type="molecule type" value="Genomic_DNA"/>
</dbReference>
<dbReference type="EMBL" id="CR456624">
    <property type="status" value="NOT_ANNOTATED_CDS"/>
    <property type="molecule type" value="Genomic_DNA"/>
</dbReference>
<dbReference type="EMBL" id="CU570696">
    <property type="status" value="NOT_ANNOTATED_CDS"/>
    <property type="molecule type" value="Genomic_DNA"/>
</dbReference>
<dbReference type="RefSeq" id="XP_009305788.1">
    <property type="nucleotide sequence ID" value="XM_009307513.4"/>
</dbReference>
<dbReference type="RefSeq" id="XP_009305789.1">
    <property type="nucleotide sequence ID" value="XM_009307514.4"/>
</dbReference>
<dbReference type="FunCoup" id="B8JI71">
    <property type="interactions" value="12"/>
</dbReference>
<dbReference type="STRING" id="7955.ENSDARP00000144515"/>
<dbReference type="GlyCosmos" id="B8JI71">
    <property type="glycosylation" value="29 sites, No reported glycans"/>
</dbReference>
<dbReference type="PaxDb" id="7955-ENSDARP00000109425"/>
<dbReference type="GeneID" id="557044"/>
<dbReference type="KEGG" id="dre:557044"/>
<dbReference type="CTD" id="346007"/>
<dbReference type="eggNOG" id="KOG1217">
    <property type="taxonomic scope" value="Eukaryota"/>
</dbReference>
<dbReference type="HOGENOM" id="CLU_004826_3_2_1"/>
<dbReference type="InParanoid" id="B8JI71"/>
<dbReference type="OrthoDB" id="283575at2759"/>
<dbReference type="PhylomeDB" id="B8JI71"/>
<dbReference type="PRO" id="PR:B8JI71"/>
<dbReference type="Proteomes" id="UP000000437">
    <property type="component" value="Chromosome 13"/>
</dbReference>
<dbReference type="GO" id="GO:0005929">
    <property type="term" value="C:cilium"/>
    <property type="evidence" value="ECO:0007669"/>
    <property type="project" value="UniProtKB-SubCell"/>
</dbReference>
<dbReference type="GO" id="GO:0005737">
    <property type="term" value="C:cytoplasm"/>
    <property type="evidence" value="ECO:0007669"/>
    <property type="project" value="UniProtKB-KW"/>
</dbReference>
<dbReference type="GO" id="GO:0005856">
    <property type="term" value="C:cytoskeleton"/>
    <property type="evidence" value="ECO:0007669"/>
    <property type="project" value="UniProtKB-KW"/>
</dbReference>
<dbReference type="GO" id="GO:0005576">
    <property type="term" value="C:extracellular region"/>
    <property type="evidence" value="ECO:0007669"/>
    <property type="project" value="UniProtKB-KW"/>
</dbReference>
<dbReference type="GO" id="GO:0033165">
    <property type="term" value="C:interphotoreceptor matrix"/>
    <property type="evidence" value="ECO:0007669"/>
    <property type="project" value="UniProtKB-SubCell"/>
</dbReference>
<dbReference type="GO" id="GO:0005886">
    <property type="term" value="C:plasma membrane"/>
    <property type="evidence" value="ECO:0007669"/>
    <property type="project" value="UniProtKB-ARBA"/>
</dbReference>
<dbReference type="GO" id="GO:0005509">
    <property type="term" value="F:calcium ion binding"/>
    <property type="evidence" value="ECO:0007669"/>
    <property type="project" value="InterPro"/>
</dbReference>
<dbReference type="GO" id="GO:0048731">
    <property type="term" value="P:system development"/>
    <property type="evidence" value="ECO:0007669"/>
    <property type="project" value="UniProtKB-ARBA"/>
</dbReference>
<dbReference type="GO" id="GO:0007601">
    <property type="term" value="P:visual perception"/>
    <property type="evidence" value="ECO:0007669"/>
    <property type="project" value="UniProtKB-KW"/>
</dbReference>
<dbReference type="CDD" id="cd00054">
    <property type="entry name" value="EGF_CA"/>
    <property type="match status" value="26"/>
</dbReference>
<dbReference type="CDD" id="cd00110">
    <property type="entry name" value="LamG"/>
    <property type="match status" value="5"/>
</dbReference>
<dbReference type="FunFam" id="2.10.25.10:FF:000142">
    <property type="entry name" value="Crumbs cell polarity complex component 2"/>
    <property type="match status" value="1"/>
</dbReference>
<dbReference type="FunFam" id="2.10.25.10:FF:000829">
    <property type="entry name" value="Crumbs homolog 2"/>
    <property type="match status" value="1"/>
</dbReference>
<dbReference type="FunFam" id="2.10.25.10:FF:000117">
    <property type="entry name" value="Delta-like protein"/>
    <property type="match status" value="1"/>
</dbReference>
<dbReference type="FunFam" id="2.10.25.10:FF:000703">
    <property type="entry name" value="Delta/notch like EGF repeat containing"/>
    <property type="match status" value="1"/>
</dbReference>
<dbReference type="FunFam" id="2.10.25.10:FF:000318">
    <property type="entry name" value="Eyes shut homolog"/>
    <property type="match status" value="1"/>
</dbReference>
<dbReference type="FunFam" id="2.10.25.10:FF:000508">
    <property type="entry name" value="Eyes shut homolog"/>
    <property type="match status" value="1"/>
</dbReference>
<dbReference type="FunFam" id="2.10.25.10:FF:000669">
    <property type="entry name" value="Eyes shut homolog"/>
    <property type="match status" value="1"/>
</dbReference>
<dbReference type="FunFam" id="2.10.25.10:FF:000004">
    <property type="entry name" value="Neurogenic locus notch 1"/>
    <property type="match status" value="2"/>
</dbReference>
<dbReference type="FunFam" id="2.10.25.10:FF:000279">
    <property type="entry name" value="Neurogenic locus notch 1"/>
    <property type="match status" value="1"/>
</dbReference>
<dbReference type="FunFam" id="2.10.25.10:FF:000100">
    <property type="entry name" value="neurogenic locus notch homolog protein 3"/>
    <property type="match status" value="1"/>
</dbReference>
<dbReference type="FunFam" id="2.10.25.10:FF:000143">
    <property type="entry name" value="Protein crumbs 1"/>
    <property type="match status" value="2"/>
</dbReference>
<dbReference type="FunFam" id="2.10.25.10:FF:000122">
    <property type="entry name" value="Protein crumbs homolog 2"/>
    <property type="match status" value="4"/>
</dbReference>
<dbReference type="FunFam" id="2.10.25.10:FF:000591">
    <property type="entry name" value="Protein eyes shut homolog"/>
    <property type="match status" value="1"/>
</dbReference>
<dbReference type="FunFam" id="2.10.25.10:FF:000830">
    <property type="entry name" value="Protein eyes shut homolog"/>
    <property type="match status" value="1"/>
</dbReference>
<dbReference type="FunFam" id="2.10.25.10:FF:001002">
    <property type="entry name" value="Protein eyes shut homolog"/>
    <property type="match status" value="1"/>
</dbReference>
<dbReference type="FunFam" id="2.10.25.10:FF:001121">
    <property type="entry name" value="Protein eyes shut homolog"/>
    <property type="match status" value="1"/>
</dbReference>
<dbReference type="FunFam" id="2.10.25.10:FF:001328">
    <property type="entry name" value="Protein eyes shut homolog"/>
    <property type="match status" value="1"/>
</dbReference>
<dbReference type="FunFam" id="2.60.120.200:FF:000183">
    <property type="entry name" value="Protein eyes shut homolog"/>
    <property type="match status" value="1"/>
</dbReference>
<dbReference type="FunFam" id="2.60.120.200:FF:000190">
    <property type="entry name" value="Protein eyes shut homolog"/>
    <property type="match status" value="1"/>
</dbReference>
<dbReference type="FunFam" id="2.60.120.200:FF:000210">
    <property type="entry name" value="Protein eyes shut homolog"/>
    <property type="match status" value="1"/>
</dbReference>
<dbReference type="FunFam" id="2.10.25.10:FF:000045">
    <property type="entry name" value="Slit guidance ligand 2"/>
    <property type="match status" value="1"/>
</dbReference>
<dbReference type="FunFam" id="2.10.25.10:FF:000053">
    <property type="entry name" value="Slit guidance ligand 2"/>
    <property type="match status" value="1"/>
</dbReference>
<dbReference type="FunFam" id="2.10.25.10:FF:000373">
    <property type="entry name" value="sushi, nidogen and EGF-like domain-containing protein 1"/>
    <property type="match status" value="1"/>
</dbReference>
<dbReference type="FunFam" id="2.10.25.10:FF:000255">
    <property type="entry name" value="Sushi, nidogen and EGF-like domains 1"/>
    <property type="match status" value="1"/>
</dbReference>
<dbReference type="FunFam" id="2.10.25.10:FF:000472">
    <property type="entry name" value="Uncharacterized protein, isoform A"/>
    <property type="match status" value="4"/>
</dbReference>
<dbReference type="Gene3D" id="2.60.120.200">
    <property type="match status" value="5"/>
</dbReference>
<dbReference type="Gene3D" id="2.10.25.10">
    <property type="entry name" value="Laminin"/>
    <property type="match status" value="40"/>
</dbReference>
<dbReference type="InterPro" id="IPR013320">
    <property type="entry name" value="ConA-like_dom_sf"/>
</dbReference>
<dbReference type="InterPro" id="IPR001881">
    <property type="entry name" value="EGF-like_Ca-bd_dom"/>
</dbReference>
<dbReference type="InterPro" id="IPR013032">
    <property type="entry name" value="EGF-like_CS"/>
</dbReference>
<dbReference type="InterPro" id="IPR000742">
    <property type="entry name" value="EGF-like_dom"/>
</dbReference>
<dbReference type="InterPro" id="IPR000152">
    <property type="entry name" value="EGF-type_Asp/Asn_hydroxyl_site"/>
</dbReference>
<dbReference type="InterPro" id="IPR018097">
    <property type="entry name" value="EGF_Ca-bd_CS"/>
</dbReference>
<dbReference type="InterPro" id="IPR009030">
    <property type="entry name" value="Growth_fac_rcpt_cys_sf"/>
</dbReference>
<dbReference type="InterPro" id="IPR001791">
    <property type="entry name" value="Laminin_G"/>
</dbReference>
<dbReference type="InterPro" id="IPR049883">
    <property type="entry name" value="NOTCH1_EGF-like"/>
</dbReference>
<dbReference type="InterPro" id="IPR051022">
    <property type="entry name" value="Notch_Cell-Fate_Det"/>
</dbReference>
<dbReference type="PANTHER" id="PTHR24049">
    <property type="entry name" value="CRUMBS FAMILY MEMBER"/>
    <property type="match status" value="1"/>
</dbReference>
<dbReference type="PANTHER" id="PTHR24049:SF22">
    <property type="entry name" value="DROSOPHILA CRUMBS HOMOLOG"/>
    <property type="match status" value="1"/>
</dbReference>
<dbReference type="Pfam" id="PF00008">
    <property type="entry name" value="EGF"/>
    <property type="match status" value="23"/>
</dbReference>
<dbReference type="Pfam" id="PF07645">
    <property type="entry name" value="EGF_CA"/>
    <property type="match status" value="1"/>
</dbReference>
<dbReference type="Pfam" id="PF12661">
    <property type="entry name" value="hEGF"/>
    <property type="match status" value="7"/>
</dbReference>
<dbReference type="Pfam" id="PF00054">
    <property type="entry name" value="Laminin_G_1"/>
    <property type="match status" value="1"/>
</dbReference>
<dbReference type="Pfam" id="PF02210">
    <property type="entry name" value="Laminin_G_2"/>
    <property type="match status" value="4"/>
</dbReference>
<dbReference type="SMART" id="SM00181">
    <property type="entry name" value="EGF"/>
    <property type="match status" value="41"/>
</dbReference>
<dbReference type="SMART" id="SM00179">
    <property type="entry name" value="EGF_CA"/>
    <property type="match status" value="38"/>
</dbReference>
<dbReference type="SMART" id="SM00282">
    <property type="entry name" value="LamG"/>
    <property type="match status" value="5"/>
</dbReference>
<dbReference type="SUPFAM" id="SSF49899">
    <property type="entry name" value="Concanavalin A-like lectins/glucanases"/>
    <property type="match status" value="5"/>
</dbReference>
<dbReference type="SUPFAM" id="SSF57196">
    <property type="entry name" value="EGF/Laminin"/>
    <property type="match status" value="25"/>
</dbReference>
<dbReference type="SUPFAM" id="SSF57184">
    <property type="entry name" value="Growth factor receptor domain"/>
    <property type="match status" value="3"/>
</dbReference>
<dbReference type="PROSITE" id="PS00010">
    <property type="entry name" value="ASX_HYDROXYL"/>
    <property type="match status" value="21"/>
</dbReference>
<dbReference type="PROSITE" id="PS00022">
    <property type="entry name" value="EGF_1"/>
    <property type="match status" value="41"/>
</dbReference>
<dbReference type="PROSITE" id="PS01186">
    <property type="entry name" value="EGF_2"/>
    <property type="match status" value="32"/>
</dbReference>
<dbReference type="PROSITE" id="PS50026">
    <property type="entry name" value="EGF_3"/>
    <property type="match status" value="41"/>
</dbReference>
<dbReference type="PROSITE" id="PS01187">
    <property type="entry name" value="EGF_CA"/>
    <property type="match status" value="16"/>
</dbReference>
<dbReference type="PROSITE" id="PS50025">
    <property type="entry name" value="LAM_G_DOMAIN"/>
    <property type="match status" value="5"/>
</dbReference>
<name>EYS_DANRE</name>
<protein>
    <recommendedName>
        <fullName evidence="9">Protein eyes shut homolog</fullName>
    </recommendedName>
</protein>
<sequence>MRNPKLAIIVFLLSCVIYGPVYSQVTCRRATSREWHTQPKNISVRWTLMENTCSSLTQCWSSFAETNGHFWTTGPYHFPQLCPLELQLGDLLFVSADGTLEQHGVQLIKVSKEEFDKCAILEPRKEQLVFASSINGTLQVESKWLMSGLNYFTIINRGSSHLCRFGLRIAVLVKPQLCQSSPLLRLCSGKGECRTTLKDDSFTCRCHKHFSGRYCENVDGCYEQPCLNGGTCLSEGSAYTDLPPYTCLCPAPFTGVNCSEIIGNQNCSKWCKEGACLKVSSTSYRCECFTGYTGTYCERKRLFCDSNPCRNDGRCEETANGYVCTCPGGFTGLNCETTAEADSYCKSSGCQLDEACATDKLNATCICVDPECLEQAEVCGTLPCLNGGICVVPNGQYHCRCRQGFSGKNCEEIIDFCKLLNINCLNEGLCLNRVGGYNCLCAPGWTGEFCQYLENACLAYPNRCLNGATCISMSQTTAPPHYMCTCLPGYTGPYCEAEVNECDSSPCQHQGTCTDFVGYYKCTCPSGYTGIDCEIDINSCWLPNATCPPETLCVDLPGDQLFKCHTPCPHYLQPCANGGHCVLHNITSYSCVCAPGWTGATCLVNINECVQHRCQNRATCVDEVGGYSCLCGHGYTGVHCELDFCSGHQCSEHAVCVDQQHNYTCRCMLGYEGTLCELETDECKSAPCTNNATCIDLVAGYQCLCAPGFKGRTCSESMNECWSRPCNNGGSCIDLVNDYICNCPLGFTGHDCSMPATGCTSNPCNTKGTSMCEEQQDGFKCVCHHGYTGLFCETSINHCVEGLCHHGSECVDLTKGFMCECLPGLRGRLCEVNIDDCLDKPCGALSICKDGINAYDCFCAPGFVGNNCEIEVNECLSQPCQNGASCSDELNSFSCLCLAGTTGSLCEINIDECQSSPCMNNGTCLDLSDGFKCICPSGFSGPECSMDINECVSYPCKNGGSCIDQPGNYYCRCLAPFKGLNCELLPCEAVNPCDNGAECVEEADLVLFPLGFQCRCRKGFTGPRCEVNIDECSSNPCLNGFCYDAVDGFYCLCNPGYAGVRCEQHINDCASNMCENNSTCVDLHLSYNCLCLPGWEGEYCQRETNECLSNPCKNNATCTDLLNAYRCVCPQGWTGLDCDEDVKECSSSPCLNGAHCVESDTPGEFSCTCPPFFTGPLCEQPYDPCELQRNPCLHNSTCRAQSDGTALCVCPVGFEGTRCEIDSDDCVSRPCQNRGICVDGVNSYSCFCEPGFSGLHCEEDINECASNPCQNQAVCQDLVNGFQCSCVPGYFGPHCNLDVNECDSSPCLHESVCINKPGGFACVCSAGFSGKWCELNVDECKSNPCRNNGSCIDGLNGYQCVCSRGFMGDHCERNTDECSSGPCVHGSCLDEIDAFSCQCEVGWTGHRCQININECEAHPCLNGGSCVDLLDKYACICADGFTGKNCDIDQNVCLQTSLNFSLCFNGGTCVDGPGVNFTCSCRPGFMGDFCEVEMNECCSEPCFNGAICQDLINGYQCHCRPGWTGLHCEDDINECLLQPCNQGMCIQNEPGHGYTCFCRPGFVGENCEYNYDDCLIQSCPETFSCKDGINNVSCVPVKTDTSSLPPISVVSWRSTDISTELQPTFAPVENLQHTEQPADASFGGYSGNSFLEFGGFEVAVPISVTVRFQTESMYGTLLYSASAKRSVFFIKLYISNGILQYDFLCNQKQGVQRINTAQWVADGNEHVVIFRQCLFPCVAEVTVSGVRTVRSAPGNYTSALRLQRTDHVFIGGLPRHRSPYKEAEPFHNYTGCIEIIEINKLRRFHMDHAIARNNVDNCRSQWHHEPPTSSTHSPTLLITVETPPGEWVRVLSPTQPAPVCPQGICLNGGTCRPVSLPSGASSFFCDCPLHFTGRLCEQDITVFSPRFDGNSFLELPSLTSLFQSDTYFPSRSSEDKRILYLTMKSRTPHGSLLYCREQDLGERFLHVFLQNARAVARLGCGAAHILTAVAAQNIRIDSLVAITVRYALPSQNNGQLCFIEIAADNGTANQQQKYMDEPVSEVVFGPTFLGGFPSVLELHHNSGNVSGFIGCIRELQMGSKELYVVGEAIRGQNIQNCDAAVCQHQPCRNGGTCISDAESWFCACPSLYSGKLCQFTACERNPCARGATCVPQTQLEAACLCPYGRQGLLCDEAINITRPKFSGLDEFGYSSYVAYPSIPSTGHFYEFHLKLTFANNASALRNNLILFSGQKGQGLSGDDFFALGVRNGRIVHKYNLGSGLATIISDRLNPRINIHTVHFGRYLKTGWLKVNGQKRRTGTSPGPLMGLNTFSQLYIGGYEEYTPELLPPGSRFQNSFQGCIFDMLFRTRQDGKFHALGGPDIRPLSGRNVGQCGVNPCSLVFCHNGGTCVDSGSSVYCQCVFGWKGALCSEKVSFCDAEHIPPPFCARGSTCVPLSDGYTCQCPLGSAGLHCQQAITISDPFFSGNQSSWMSFPPINIRHRTHVQLQFQTLSPEGILFYTAQHLSTHSGDFLSISLSAGFLQLRYNLGNQTIVLQSPKELDVTGVRWHTVKAGREGNSGFLIVDGESVTRNSSEGSTTLDVGANIFIGGISSLNTVSIDAVEKELVGFTGGIREVVVNGQELELTETGALDGANVGDWDGTACGYKVCKNGGHCHPSGDFSFTCICPSLWTGSRCQQSIQCLNNLCQHNSVCIHNSTSASYSCMCSLGWTGTHCDREVTLKTIRFIGNSYLKYKDPKYNSRNLMHTEVSLNFSTSAGDGLIFWMGKAESEDDDHLAVGLQDGYLKISVNLGERTALPLVYQNSFCCNYWNYLSITHNRTLIQVYVNEERVIFEDIDPFEQYVAVNYGGVIYLGGFELNRDVASVTSGVFTKGFEGSIKDVFLYQDTKQLQFLQTCEGFNVYQGEE</sequence>
<gene>
    <name evidence="9" type="primary">eys</name>
</gene>
<reference evidence="11" key="1">
    <citation type="journal article" date="2013" name="Nature">
        <title>The zebrafish reference genome sequence and its relationship to the human genome.</title>
        <authorList>
            <person name="Howe K."/>
            <person name="Clark M.D."/>
            <person name="Torroja C.F."/>
            <person name="Torrance J."/>
            <person name="Berthelot C."/>
            <person name="Muffato M."/>
            <person name="Collins J.E."/>
            <person name="Humphray S."/>
            <person name="McLaren K."/>
            <person name="Matthews L."/>
            <person name="McLaren S."/>
            <person name="Sealy I."/>
            <person name="Caccamo M."/>
            <person name="Churcher C."/>
            <person name="Scott C."/>
            <person name="Barrett J.C."/>
            <person name="Koch R."/>
            <person name="Rauch G.J."/>
            <person name="White S."/>
            <person name="Chow W."/>
            <person name="Kilian B."/>
            <person name="Quintais L.T."/>
            <person name="Guerra-Assuncao J.A."/>
            <person name="Zhou Y."/>
            <person name="Gu Y."/>
            <person name="Yen J."/>
            <person name="Vogel J.H."/>
            <person name="Eyre T."/>
            <person name="Redmond S."/>
            <person name="Banerjee R."/>
            <person name="Chi J."/>
            <person name="Fu B."/>
            <person name="Langley E."/>
            <person name="Maguire S.F."/>
            <person name="Laird G.K."/>
            <person name="Lloyd D."/>
            <person name="Kenyon E."/>
            <person name="Donaldson S."/>
            <person name="Sehra H."/>
            <person name="Almeida-King J."/>
            <person name="Loveland J."/>
            <person name="Trevanion S."/>
            <person name="Jones M."/>
            <person name="Quail M."/>
            <person name="Willey D."/>
            <person name="Hunt A."/>
            <person name="Burton J."/>
            <person name="Sims S."/>
            <person name="McLay K."/>
            <person name="Plumb B."/>
            <person name="Davis J."/>
            <person name="Clee C."/>
            <person name="Oliver K."/>
            <person name="Clark R."/>
            <person name="Riddle C."/>
            <person name="Elliot D."/>
            <person name="Threadgold G."/>
            <person name="Harden G."/>
            <person name="Ware D."/>
            <person name="Begum S."/>
            <person name="Mortimore B."/>
            <person name="Kerry G."/>
            <person name="Heath P."/>
            <person name="Phillimore B."/>
            <person name="Tracey A."/>
            <person name="Corby N."/>
            <person name="Dunn M."/>
            <person name="Johnson C."/>
            <person name="Wood J."/>
            <person name="Clark S."/>
            <person name="Pelan S."/>
            <person name="Griffiths G."/>
            <person name="Smith M."/>
            <person name="Glithero R."/>
            <person name="Howden P."/>
            <person name="Barker N."/>
            <person name="Lloyd C."/>
            <person name="Stevens C."/>
            <person name="Harley J."/>
            <person name="Holt K."/>
            <person name="Panagiotidis G."/>
            <person name="Lovell J."/>
            <person name="Beasley H."/>
            <person name="Henderson C."/>
            <person name="Gordon D."/>
            <person name="Auger K."/>
            <person name="Wright D."/>
            <person name="Collins J."/>
            <person name="Raisen C."/>
            <person name="Dyer L."/>
            <person name="Leung K."/>
            <person name="Robertson L."/>
            <person name="Ambridge K."/>
            <person name="Leongamornlert D."/>
            <person name="McGuire S."/>
            <person name="Gilderthorp R."/>
            <person name="Griffiths C."/>
            <person name="Manthravadi D."/>
            <person name="Nichol S."/>
            <person name="Barker G."/>
            <person name="Whitehead S."/>
            <person name="Kay M."/>
            <person name="Brown J."/>
            <person name="Murnane C."/>
            <person name="Gray E."/>
            <person name="Humphries M."/>
            <person name="Sycamore N."/>
            <person name="Barker D."/>
            <person name="Saunders D."/>
            <person name="Wallis J."/>
            <person name="Babbage A."/>
            <person name="Hammond S."/>
            <person name="Mashreghi-Mohammadi M."/>
            <person name="Barr L."/>
            <person name="Martin S."/>
            <person name="Wray P."/>
            <person name="Ellington A."/>
            <person name="Matthews N."/>
            <person name="Ellwood M."/>
            <person name="Woodmansey R."/>
            <person name="Clark G."/>
            <person name="Cooper J."/>
            <person name="Tromans A."/>
            <person name="Grafham D."/>
            <person name="Skuce C."/>
            <person name="Pandian R."/>
            <person name="Andrews R."/>
            <person name="Harrison E."/>
            <person name="Kimberley A."/>
            <person name="Garnett J."/>
            <person name="Fosker N."/>
            <person name="Hall R."/>
            <person name="Garner P."/>
            <person name="Kelly D."/>
            <person name="Bird C."/>
            <person name="Palmer S."/>
            <person name="Gehring I."/>
            <person name="Berger A."/>
            <person name="Dooley C.M."/>
            <person name="Ersan-Urun Z."/>
            <person name="Eser C."/>
            <person name="Geiger H."/>
            <person name="Geisler M."/>
            <person name="Karotki L."/>
            <person name="Kirn A."/>
            <person name="Konantz J."/>
            <person name="Konantz M."/>
            <person name="Oberlander M."/>
            <person name="Rudolph-Geiger S."/>
            <person name="Teucke M."/>
            <person name="Lanz C."/>
            <person name="Raddatz G."/>
            <person name="Osoegawa K."/>
            <person name="Zhu B."/>
            <person name="Rapp A."/>
            <person name="Widaa S."/>
            <person name="Langford C."/>
            <person name="Yang F."/>
            <person name="Schuster S.C."/>
            <person name="Carter N.P."/>
            <person name="Harrow J."/>
            <person name="Ning Z."/>
            <person name="Herrero J."/>
            <person name="Searle S.M."/>
            <person name="Enright A."/>
            <person name="Geisler R."/>
            <person name="Plasterk R.H."/>
            <person name="Lee C."/>
            <person name="Westerfield M."/>
            <person name="de Jong P.J."/>
            <person name="Zon L.I."/>
            <person name="Postlethwait J.H."/>
            <person name="Nusslein-Volhard C."/>
            <person name="Hubbard T.J."/>
            <person name="Roest Crollius H."/>
            <person name="Rogers J."/>
            <person name="Stemple D.L."/>
        </authorList>
    </citation>
    <scope>NUCLEOTIDE SEQUENCE [LARGE SCALE GENOMIC DNA]</scope>
    <source>
        <strain evidence="11">Tuebingen</strain>
    </source>
</reference>
<reference evidence="10" key="2">
    <citation type="journal article" date="2016" name="Biol. Open">
        <title>Eyes shut homolog is required for maintaining the ciliary pocket and survival of photoreceptors in zebrafish.</title>
        <authorList>
            <person name="Yu M."/>
            <person name="Liu Y."/>
            <person name="Li J."/>
            <person name="Natale B.N."/>
            <person name="Cao S."/>
            <person name="Wang D."/>
            <person name="Amack J.D."/>
            <person name="Hu H."/>
        </authorList>
    </citation>
    <scope>FUNCTION</scope>
    <scope>SUBCELLULAR LOCATION</scope>
    <scope>TISSUE SPECIFICITY</scope>
    <scope>DISRUPTION PHENOTYPE</scope>
</reference>
<reference evidence="10" key="3">
    <citation type="journal article" date="2017" name="Sci. Rep.">
        <title>Ablation of EYS in zebrafish causes mislocalisation of outer segment proteins, F-actin disruption and cone-rod dystrophy.</title>
        <authorList>
            <person name="Lu Z."/>
            <person name="Hu X."/>
            <person name="Liu F."/>
            <person name="Soares D.C."/>
            <person name="Liu X."/>
            <person name="Yu S."/>
            <person name="Gao M."/>
            <person name="Han S."/>
            <person name="Qin Y."/>
            <person name="Li C."/>
            <person name="Jiang T."/>
            <person name="Luo D."/>
            <person name="Guo A.Y."/>
            <person name="Tang Z."/>
            <person name="Liu M."/>
        </authorList>
    </citation>
    <scope>FUNCTION</scope>
    <scope>MUTAGENESIS OF CYS-1860</scope>
</reference>
<reference evidence="10" key="4">
    <citation type="journal article" date="2018" name="PLoS ONE">
        <title>Eyes shut homolog is important for the maintenance of photoreceptor morphology and visual function in zebrafish.</title>
        <authorList>
            <person name="Messchaert M."/>
            <person name="Dona M."/>
            <person name="Broekman S."/>
            <person name="Peters T.A."/>
            <person name="Corral-Serrano J.C."/>
            <person name="Slijkerman R.W.N."/>
            <person name="van Wijk E."/>
            <person name="Collin R.W.J."/>
        </authorList>
    </citation>
    <scope>FUNCTION</scope>
    <scope>SUBCELLULAR LOCATION</scope>
    <scope>TISSUE SPECIFICITY</scope>
    <scope>MUTAGENESIS OF GLY-1163</scope>
</reference>
<accession>B8JI71</accession>
<feature type="signal peptide" evidence="2">
    <location>
        <begin position="1"/>
        <end position="23"/>
    </location>
</feature>
<feature type="chain" id="PRO_0000446503" description="Protein eyes shut homolog" evidence="2">
    <location>
        <begin position="24"/>
        <end position="2904"/>
    </location>
</feature>
<feature type="domain" description="EGF-like 1" evidence="3">
    <location>
        <begin position="174"/>
        <end position="216"/>
    </location>
</feature>
<feature type="domain" description="EGF-like 2" evidence="3">
    <location>
        <begin position="217"/>
        <end position="259"/>
    </location>
</feature>
<feature type="domain" description="EGF-like 3" evidence="3">
    <location>
        <begin position="263"/>
        <end position="298"/>
    </location>
</feature>
<feature type="domain" description="EGF-like 4" evidence="3">
    <location>
        <begin position="300"/>
        <end position="336"/>
    </location>
</feature>
<feature type="domain" description="EGF-like 5" evidence="3">
    <location>
        <begin position="375"/>
        <end position="411"/>
    </location>
</feature>
<feature type="domain" description="EGF-like 6" evidence="3">
    <location>
        <begin position="413"/>
        <end position="451"/>
    </location>
</feature>
<feature type="domain" description="EGF-like 7" evidence="3">
    <location>
        <begin position="453"/>
        <end position="496"/>
    </location>
</feature>
<feature type="domain" description="EGF-like 8; calcium-binding" evidence="3">
    <location>
        <begin position="498"/>
        <end position="534"/>
    </location>
</feature>
<feature type="domain" description="EGF-like 9" evidence="3">
    <location>
        <begin position="565"/>
        <end position="603"/>
    </location>
</feature>
<feature type="domain" description="EGF-like 10; calcium-binding" evidence="3">
    <location>
        <begin position="605"/>
        <end position="641"/>
    </location>
</feature>
<feature type="domain" description="EGF-like 11" evidence="3">
    <location>
        <begin position="642"/>
        <end position="677"/>
    </location>
</feature>
<feature type="domain" description="EGF-like 12; calcium-binding" evidence="3">
    <location>
        <begin position="679"/>
        <end position="715"/>
    </location>
</feature>
<feature type="domain" description="EGF-like 13" evidence="3">
    <location>
        <begin position="717"/>
        <end position="753"/>
    </location>
</feature>
<feature type="domain" description="EGF-like 14" evidence="3">
    <location>
        <begin position="755"/>
        <end position="793"/>
    </location>
</feature>
<feature type="domain" description="EGF-like 15" evidence="3">
    <location>
        <begin position="795"/>
        <end position="831"/>
    </location>
</feature>
<feature type="domain" description="EGF-like 16; calcium-binding" evidence="3">
    <location>
        <begin position="833"/>
        <end position="869"/>
    </location>
</feature>
<feature type="domain" description="EGF-like 17; calcium-binding" evidence="3">
    <location>
        <begin position="871"/>
        <end position="907"/>
    </location>
</feature>
<feature type="domain" description="EGF-like 18; calcium-binding" evidence="3">
    <location>
        <begin position="909"/>
        <end position="945"/>
    </location>
</feature>
<feature type="domain" description="EGF-like 19; calcium-binding" evidence="3">
    <location>
        <begin position="947"/>
        <end position="983"/>
    </location>
</feature>
<feature type="domain" description="EGF-like 20" evidence="3">
    <location>
        <begin position="984"/>
        <end position="1026"/>
    </location>
</feature>
<feature type="domain" description="EGF-like 21; calcium-binding" evidence="3">
    <location>
        <begin position="1028"/>
        <end position="1063"/>
    </location>
</feature>
<feature type="domain" description="EGF-like 22" evidence="3">
    <location>
        <begin position="1065"/>
        <end position="1101"/>
    </location>
</feature>
<feature type="domain" description="EGF-like 23; calcium-binding" evidence="3">
    <location>
        <begin position="1103"/>
        <end position="1139"/>
    </location>
</feature>
<feature type="domain" description="EGF-like 24" evidence="3">
    <location>
        <begin position="1141"/>
        <end position="1179"/>
    </location>
</feature>
<feature type="domain" description="EGF-like 25" evidence="3">
    <location>
        <begin position="1181"/>
        <end position="1220"/>
    </location>
</feature>
<feature type="domain" description="EGF-like 26; calcium-binding" evidence="3">
    <location>
        <begin position="1222"/>
        <end position="1258"/>
    </location>
</feature>
<feature type="domain" description="EGF-like 27; calcium-binding" evidence="3">
    <location>
        <begin position="1260"/>
        <end position="1296"/>
    </location>
</feature>
<feature type="domain" description="EGF-like 28; calcium-binding" evidence="3">
    <location>
        <begin position="1298"/>
        <end position="1334"/>
    </location>
</feature>
<feature type="domain" description="EGF-like 29; calcium-binding" evidence="3">
    <location>
        <begin position="1336"/>
        <end position="1372"/>
    </location>
</feature>
<feature type="domain" description="EGF-like 30; calcium-binding" evidence="3">
    <location>
        <begin position="1374"/>
        <end position="1409"/>
    </location>
</feature>
<feature type="domain" description="EGF-like 31; calcium-binding" evidence="3">
    <location>
        <begin position="1411"/>
        <end position="1447"/>
    </location>
</feature>
<feature type="domain" description="EGF-like 32" evidence="3">
    <location>
        <begin position="1449"/>
        <end position="1491"/>
    </location>
</feature>
<feature type="domain" description="EGF-like 33; calcium-binding" evidence="3">
    <location>
        <begin position="1493"/>
        <end position="1529"/>
    </location>
</feature>
<feature type="domain" description="EGF-like 34" evidence="3">
    <location>
        <begin position="1531"/>
        <end position="1568"/>
    </location>
</feature>
<feature type="domain" description="Laminin G-like 1" evidence="4">
    <location>
        <begin position="1640"/>
        <end position="1818"/>
    </location>
</feature>
<feature type="domain" description="EGF-like 35" evidence="3">
    <location>
        <begin position="1856"/>
        <end position="1897"/>
    </location>
</feature>
<feature type="domain" description="Laminin G-like 2" evidence="4">
    <location>
        <begin position="1902"/>
        <end position="2102"/>
    </location>
</feature>
<feature type="domain" description="EGF-like 36" evidence="3">
    <location>
        <begin position="2098"/>
        <end position="2134"/>
    </location>
</feature>
<feature type="domain" description="EGF-like 37" evidence="3">
    <location>
        <begin position="2135"/>
        <end position="2171"/>
    </location>
</feature>
<feature type="domain" description="Laminin G-like 3" evidence="4">
    <location>
        <begin position="2182"/>
        <end position="2372"/>
    </location>
</feature>
<feature type="domain" description="EGF-like 38" evidence="3">
    <location>
        <begin position="2373"/>
        <end position="2409"/>
    </location>
</feature>
<feature type="domain" description="EGF-like 39" evidence="3">
    <location>
        <begin position="2411"/>
        <end position="2452"/>
    </location>
</feature>
<feature type="domain" description="Laminin G-like 4" evidence="4">
    <location>
        <begin position="2459"/>
        <end position="2642"/>
    </location>
</feature>
<feature type="domain" description="EGF-like 40" evidence="3">
    <location>
        <begin position="2638"/>
        <end position="2675"/>
    </location>
</feature>
<feature type="domain" description="EGF-like 41" evidence="3">
    <location>
        <begin position="2676"/>
        <end position="2714"/>
    </location>
</feature>
<feature type="domain" description="Laminin G-like 5" evidence="4">
    <location>
        <begin position="2719"/>
        <end position="2894"/>
    </location>
</feature>
<feature type="glycosylation site" description="N-linked (GlcNAc...) asparagine" evidence="5">
    <location>
        <position position="41"/>
    </location>
</feature>
<feature type="glycosylation site" description="N-linked (GlcNAc...) asparagine" evidence="5">
    <location>
        <position position="135"/>
    </location>
</feature>
<feature type="glycosylation site" description="N-linked (GlcNAc...) asparagine" evidence="5">
    <location>
        <position position="257"/>
    </location>
</feature>
<feature type="glycosylation site" description="N-linked (GlcNAc...) asparagine" evidence="5">
    <location>
        <position position="266"/>
    </location>
</feature>
<feature type="glycosylation site" description="N-linked (GlcNAc...) asparagine" evidence="5">
    <location>
        <position position="362"/>
    </location>
</feature>
<feature type="glycosylation site" description="N-linked (GlcNAc...) asparagine" evidence="5">
    <location>
        <position position="544"/>
    </location>
</feature>
<feature type="glycosylation site" description="N-linked (GlcNAc...) asparagine" evidence="5">
    <location>
        <position position="585"/>
    </location>
</feature>
<feature type="glycosylation site" description="N-linked (GlcNAc...) asparagine" evidence="5">
    <location>
        <position position="662"/>
    </location>
</feature>
<feature type="glycosylation site" description="N-linked (GlcNAc...) asparagine" evidence="5">
    <location>
        <position position="691"/>
    </location>
</feature>
<feature type="glycosylation site" description="N-linked (GlcNAc...) asparagine" evidence="5">
    <location>
        <position position="921"/>
    </location>
</feature>
<feature type="glycosylation site" description="N-linked (GlcNAc...) asparagine" evidence="5">
    <location>
        <position position="1077"/>
    </location>
</feature>
<feature type="glycosylation site" description="N-linked (GlcNAc...) asparagine" evidence="5">
    <location>
        <position position="1115"/>
    </location>
</feature>
<feature type="glycosylation site" description="N-linked (GlcNAc...) asparagine" evidence="5">
    <location>
        <position position="1195"/>
    </location>
</feature>
<feature type="glycosylation site" description="N-linked (GlcNAc...) asparagine" evidence="5">
    <location>
        <position position="1348"/>
    </location>
</feature>
<feature type="glycosylation site" description="N-linked (GlcNAc...) asparagine" evidence="5">
    <location>
        <position position="1459"/>
    </location>
</feature>
<feature type="glycosylation site" description="N-linked (GlcNAc...) asparagine" evidence="5">
    <location>
        <position position="1476"/>
    </location>
</feature>
<feature type="glycosylation site" description="N-linked (GlcNAc...) asparagine" evidence="5">
    <location>
        <position position="1591"/>
    </location>
</feature>
<feature type="glycosylation site" description="N-linked (GlcNAc...) asparagine" evidence="5">
    <location>
        <position position="1755"/>
    </location>
</feature>
<feature type="glycosylation site" description="N-linked (GlcNAc...) asparagine" evidence="5">
    <location>
        <position position="1788"/>
    </location>
</feature>
<feature type="glycosylation site" description="N-linked (GlcNAc...) asparagine" evidence="5">
    <location>
        <position position="2025"/>
    </location>
</feature>
<feature type="glycosylation site" description="N-linked (GlcNAc...) asparagine" evidence="5">
    <location>
        <position position="2064"/>
    </location>
</feature>
<feature type="glycosylation site" description="N-linked (GlcNAc...) asparagine" evidence="5">
    <location>
        <position position="2175"/>
    </location>
</feature>
<feature type="glycosylation site" description="N-linked (GlcNAc...) asparagine" evidence="5">
    <location>
        <position position="2216"/>
    </location>
</feature>
<feature type="glycosylation site" description="N-linked (GlcNAc...) asparagine" evidence="5">
    <location>
        <position position="2465"/>
    </location>
</feature>
<feature type="glycosylation site" description="N-linked (GlcNAc...) asparagine" evidence="5">
    <location>
        <position position="2528"/>
    </location>
</feature>
<feature type="glycosylation site" description="N-linked (GlcNAc...) asparagine" evidence="5">
    <location>
        <position position="2570"/>
    </location>
</feature>
<feature type="glycosylation site" description="N-linked (GlcNAc...) asparagine" evidence="5">
    <location>
        <position position="2694"/>
    </location>
</feature>
<feature type="glycosylation site" description="N-linked (GlcNAc...) asparagine" evidence="5">
    <location>
        <position position="2750"/>
    </location>
</feature>
<feature type="glycosylation site" description="N-linked (GlcNAc...) asparagine" evidence="5">
    <location>
        <position position="2816"/>
    </location>
</feature>
<feature type="disulfide bond" evidence="3">
    <location>
        <begin position="178"/>
        <end position="193"/>
    </location>
</feature>
<feature type="disulfide bond" evidence="3">
    <location>
        <begin position="187"/>
        <end position="204"/>
    </location>
</feature>
<feature type="disulfide bond" evidence="3">
    <location>
        <begin position="206"/>
        <end position="215"/>
    </location>
</feature>
<feature type="disulfide bond" evidence="3">
    <location>
        <begin position="221"/>
        <end position="232"/>
    </location>
</feature>
<feature type="disulfide bond" evidence="3">
    <location>
        <begin position="226"/>
        <end position="247"/>
    </location>
</feature>
<feature type="disulfide bond" evidence="3">
    <location>
        <begin position="249"/>
        <end position="258"/>
    </location>
</feature>
<feature type="disulfide bond" evidence="3">
    <location>
        <begin position="267"/>
        <end position="276"/>
    </location>
</feature>
<feature type="disulfide bond" evidence="3">
    <location>
        <begin position="271"/>
        <end position="286"/>
    </location>
</feature>
<feature type="disulfide bond" evidence="3">
    <location>
        <begin position="288"/>
        <end position="297"/>
    </location>
</feature>
<feature type="disulfide bond" evidence="3">
    <location>
        <begin position="304"/>
        <end position="315"/>
    </location>
</feature>
<feature type="disulfide bond" evidence="3">
    <location>
        <begin position="309"/>
        <end position="324"/>
    </location>
</feature>
<feature type="disulfide bond" evidence="3">
    <location>
        <begin position="326"/>
        <end position="335"/>
    </location>
</feature>
<feature type="disulfide bond" evidence="3">
    <location>
        <begin position="379"/>
        <end position="390"/>
    </location>
</feature>
<feature type="disulfide bond" evidence="3">
    <location>
        <begin position="384"/>
        <end position="399"/>
    </location>
</feature>
<feature type="disulfide bond" evidence="3">
    <location>
        <begin position="401"/>
        <end position="410"/>
    </location>
</feature>
<feature type="disulfide bond" evidence="3">
    <location>
        <begin position="417"/>
        <end position="430"/>
    </location>
</feature>
<feature type="disulfide bond" evidence="3">
    <location>
        <begin position="424"/>
        <end position="439"/>
    </location>
</feature>
<feature type="disulfide bond" evidence="3">
    <location>
        <begin position="441"/>
        <end position="450"/>
    </location>
</feature>
<feature type="disulfide bond" evidence="3">
    <location>
        <begin position="457"/>
        <end position="470"/>
    </location>
</feature>
<feature type="disulfide bond" evidence="3">
    <location>
        <begin position="464"/>
        <end position="484"/>
    </location>
</feature>
<feature type="disulfide bond" evidence="3">
    <location>
        <begin position="486"/>
        <end position="495"/>
    </location>
</feature>
<feature type="disulfide bond" evidence="3">
    <location>
        <begin position="502"/>
        <end position="513"/>
    </location>
</feature>
<feature type="disulfide bond" evidence="3">
    <location>
        <begin position="507"/>
        <end position="522"/>
    </location>
</feature>
<feature type="disulfide bond" evidence="3">
    <location>
        <begin position="524"/>
        <end position="533"/>
    </location>
</feature>
<feature type="disulfide bond" evidence="3">
    <location>
        <begin position="568"/>
        <end position="581"/>
    </location>
</feature>
<feature type="disulfide bond" evidence="3">
    <location>
        <begin position="575"/>
        <end position="591"/>
    </location>
</feature>
<feature type="disulfide bond" evidence="3">
    <location>
        <begin position="593"/>
        <end position="602"/>
    </location>
</feature>
<feature type="disulfide bond" evidence="3">
    <location>
        <begin position="609"/>
        <end position="620"/>
    </location>
</feature>
<feature type="disulfide bond" evidence="3">
    <location>
        <begin position="614"/>
        <end position="629"/>
    </location>
</feature>
<feature type="disulfide bond" evidence="3">
    <location>
        <begin position="631"/>
        <end position="640"/>
    </location>
</feature>
<feature type="disulfide bond" evidence="3">
    <location>
        <begin position="645"/>
        <end position="656"/>
    </location>
</feature>
<feature type="disulfide bond" evidence="3">
    <location>
        <begin position="650"/>
        <end position="665"/>
    </location>
</feature>
<feature type="disulfide bond" evidence="3">
    <location>
        <begin position="667"/>
        <end position="676"/>
    </location>
</feature>
<feature type="disulfide bond" evidence="3">
    <location>
        <begin position="683"/>
        <end position="694"/>
    </location>
</feature>
<feature type="disulfide bond" evidence="3">
    <location>
        <begin position="688"/>
        <end position="703"/>
    </location>
</feature>
<feature type="disulfide bond" evidence="3">
    <location>
        <begin position="705"/>
        <end position="714"/>
    </location>
</feature>
<feature type="disulfide bond" evidence="3">
    <location>
        <begin position="721"/>
        <end position="732"/>
    </location>
</feature>
<feature type="disulfide bond" evidence="3">
    <location>
        <begin position="726"/>
        <end position="741"/>
    </location>
</feature>
<feature type="disulfide bond" evidence="3">
    <location>
        <begin position="743"/>
        <end position="752"/>
    </location>
</feature>
<feature type="disulfide bond" evidence="3">
    <location>
        <begin position="759"/>
        <end position="772"/>
    </location>
</feature>
<feature type="disulfide bond" evidence="3">
    <location>
        <begin position="764"/>
        <end position="781"/>
    </location>
</feature>
<feature type="disulfide bond" evidence="3">
    <location>
        <begin position="783"/>
        <end position="792"/>
    </location>
</feature>
<feature type="disulfide bond" evidence="3">
    <location>
        <begin position="799"/>
        <end position="810"/>
    </location>
</feature>
<feature type="disulfide bond" evidence="3">
    <location>
        <begin position="804"/>
        <end position="819"/>
    </location>
</feature>
<feature type="disulfide bond" evidence="3">
    <location>
        <begin position="821"/>
        <end position="830"/>
    </location>
</feature>
<feature type="disulfide bond" evidence="3">
    <location>
        <begin position="837"/>
        <end position="848"/>
    </location>
</feature>
<feature type="disulfide bond" evidence="3">
    <location>
        <begin position="842"/>
        <end position="857"/>
    </location>
</feature>
<feature type="disulfide bond" evidence="3">
    <location>
        <begin position="859"/>
        <end position="868"/>
    </location>
</feature>
<feature type="disulfide bond" evidence="3">
    <location>
        <begin position="875"/>
        <end position="886"/>
    </location>
</feature>
<feature type="disulfide bond" evidence="3">
    <location>
        <begin position="880"/>
        <end position="895"/>
    </location>
</feature>
<feature type="disulfide bond" evidence="3">
    <location>
        <begin position="897"/>
        <end position="906"/>
    </location>
</feature>
<feature type="disulfide bond" evidence="3">
    <location>
        <begin position="913"/>
        <end position="924"/>
    </location>
</feature>
<feature type="disulfide bond" evidence="3">
    <location>
        <begin position="918"/>
        <end position="933"/>
    </location>
</feature>
<feature type="disulfide bond" evidence="3">
    <location>
        <begin position="935"/>
        <end position="944"/>
    </location>
</feature>
<feature type="disulfide bond" evidence="3">
    <location>
        <begin position="951"/>
        <end position="962"/>
    </location>
</feature>
<feature type="disulfide bond" evidence="3">
    <location>
        <begin position="956"/>
        <end position="971"/>
    </location>
</feature>
<feature type="disulfide bond" evidence="3">
    <location>
        <begin position="973"/>
        <end position="982"/>
    </location>
</feature>
<feature type="disulfide bond" evidence="3">
    <location>
        <begin position="987"/>
        <end position="999"/>
    </location>
</feature>
<feature type="disulfide bond" evidence="3">
    <location>
        <begin position="993"/>
        <end position="1014"/>
    </location>
</feature>
<feature type="disulfide bond" evidence="3">
    <location>
        <begin position="1016"/>
        <end position="1025"/>
    </location>
</feature>
<feature type="disulfide bond" evidence="3">
    <location>
        <begin position="1032"/>
        <end position="1042"/>
    </location>
</feature>
<feature type="disulfide bond" evidence="3">
    <location>
        <begin position="1037"/>
        <end position="1051"/>
    </location>
</feature>
<feature type="disulfide bond" evidence="3">
    <location>
        <begin position="1053"/>
        <end position="1062"/>
    </location>
</feature>
<feature type="disulfide bond" evidence="3">
    <location>
        <begin position="1069"/>
        <end position="1080"/>
    </location>
</feature>
<feature type="disulfide bond" evidence="3">
    <location>
        <begin position="1074"/>
        <end position="1089"/>
    </location>
</feature>
<feature type="disulfide bond" evidence="3">
    <location>
        <begin position="1091"/>
        <end position="1100"/>
    </location>
</feature>
<feature type="disulfide bond" evidence="3">
    <location>
        <begin position="1107"/>
        <end position="1118"/>
    </location>
</feature>
<feature type="disulfide bond" evidence="3">
    <location>
        <begin position="1112"/>
        <end position="1127"/>
    </location>
</feature>
<feature type="disulfide bond" evidence="3">
    <location>
        <begin position="1129"/>
        <end position="1138"/>
    </location>
</feature>
<feature type="disulfide bond" evidence="3">
    <location>
        <begin position="1145"/>
        <end position="1156"/>
    </location>
</feature>
<feature type="disulfide bond" evidence="3">
    <location>
        <begin position="1150"/>
        <end position="1167"/>
    </location>
</feature>
<feature type="disulfide bond" evidence="3">
    <location>
        <begin position="1169"/>
        <end position="1178"/>
    </location>
</feature>
<feature type="disulfide bond" evidence="3">
    <location>
        <begin position="1185"/>
        <end position="1198"/>
    </location>
</feature>
<feature type="disulfide bond" evidence="3">
    <location>
        <begin position="1192"/>
        <end position="1208"/>
    </location>
</feature>
<feature type="disulfide bond" evidence="3">
    <location>
        <begin position="1210"/>
        <end position="1219"/>
    </location>
</feature>
<feature type="disulfide bond" evidence="3">
    <location>
        <begin position="1226"/>
        <end position="1237"/>
    </location>
</feature>
<feature type="disulfide bond" evidence="3">
    <location>
        <begin position="1231"/>
        <end position="1246"/>
    </location>
</feature>
<feature type="disulfide bond" evidence="3">
    <location>
        <begin position="1248"/>
        <end position="1257"/>
    </location>
</feature>
<feature type="disulfide bond" evidence="3">
    <location>
        <begin position="1264"/>
        <end position="1275"/>
    </location>
</feature>
<feature type="disulfide bond" evidence="3">
    <location>
        <begin position="1269"/>
        <end position="1284"/>
    </location>
</feature>
<feature type="disulfide bond" evidence="3">
    <location>
        <begin position="1286"/>
        <end position="1295"/>
    </location>
</feature>
<feature type="disulfide bond" evidence="3">
    <location>
        <begin position="1302"/>
        <end position="1313"/>
    </location>
</feature>
<feature type="disulfide bond" evidence="3">
    <location>
        <begin position="1307"/>
        <end position="1322"/>
    </location>
</feature>
<feature type="disulfide bond" evidence="3">
    <location>
        <begin position="1324"/>
        <end position="1333"/>
    </location>
</feature>
<feature type="disulfide bond" evidence="3">
    <location>
        <begin position="1340"/>
        <end position="1351"/>
    </location>
</feature>
<feature type="disulfide bond" evidence="3">
    <location>
        <begin position="1345"/>
        <end position="1360"/>
    </location>
</feature>
<feature type="disulfide bond" evidence="3">
    <location>
        <begin position="1362"/>
        <end position="1371"/>
    </location>
</feature>
<feature type="disulfide bond" evidence="3">
    <location>
        <begin position="1378"/>
        <end position="1388"/>
    </location>
</feature>
<feature type="disulfide bond" evidence="3">
    <location>
        <begin position="1383"/>
        <end position="1397"/>
    </location>
</feature>
<feature type="disulfide bond" evidence="3">
    <location>
        <begin position="1399"/>
        <end position="1408"/>
    </location>
</feature>
<feature type="disulfide bond" evidence="3">
    <location>
        <begin position="1415"/>
        <end position="1426"/>
    </location>
</feature>
<feature type="disulfide bond" evidence="3">
    <location>
        <begin position="1420"/>
        <end position="1435"/>
    </location>
</feature>
<feature type="disulfide bond" evidence="3">
    <location>
        <begin position="1437"/>
        <end position="1446"/>
    </location>
</feature>
<feature type="disulfide bond" evidence="3">
    <location>
        <begin position="1453"/>
        <end position="1469"/>
    </location>
</feature>
<feature type="disulfide bond" evidence="3">
    <location>
        <begin position="1463"/>
        <end position="1479"/>
    </location>
</feature>
<feature type="disulfide bond" evidence="3">
    <location>
        <begin position="1481"/>
        <end position="1490"/>
    </location>
</feature>
<feature type="disulfide bond" evidence="3">
    <location>
        <begin position="1497"/>
        <end position="1508"/>
    </location>
</feature>
<feature type="disulfide bond" evidence="3">
    <location>
        <begin position="1502"/>
        <end position="1517"/>
    </location>
</feature>
<feature type="disulfide bond" evidence="3">
    <location>
        <begin position="1519"/>
        <end position="1528"/>
    </location>
</feature>
<feature type="disulfide bond" evidence="3">
    <location>
        <begin position="1535"/>
        <end position="1545"/>
    </location>
</feature>
<feature type="disulfide bond" evidence="3">
    <location>
        <begin position="1540"/>
        <end position="1556"/>
    </location>
</feature>
<feature type="disulfide bond" evidence="3">
    <location>
        <begin position="1558"/>
        <end position="1567"/>
    </location>
</feature>
<feature type="disulfide bond" evidence="4">
    <location>
        <begin position="1792"/>
        <end position="1818"/>
    </location>
</feature>
<feature type="disulfide bond" evidence="3">
    <location>
        <begin position="1860"/>
        <end position="1871"/>
    </location>
</feature>
<feature type="disulfide bond" evidence="3">
    <location>
        <begin position="1865"/>
        <end position="1885"/>
    </location>
</feature>
<feature type="disulfide bond" evidence="3">
    <location>
        <begin position="1887"/>
        <end position="1896"/>
    </location>
</feature>
<feature type="disulfide bond" evidence="4">
    <location>
        <begin position="2071"/>
        <end position="2102"/>
    </location>
</feature>
<feature type="disulfide bond" evidence="3">
    <location>
        <begin position="2102"/>
        <end position="2113"/>
    </location>
</feature>
<feature type="disulfide bond" evidence="3">
    <location>
        <begin position="2107"/>
        <end position="2122"/>
    </location>
</feature>
<feature type="disulfide bond" evidence="3">
    <location>
        <begin position="2124"/>
        <end position="2133"/>
    </location>
</feature>
<feature type="disulfide bond" evidence="3">
    <location>
        <begin position="2138"/>
        <end position="2149"/>
    </location>
</feature>
<feature type="disulfide bond" evidence="3">
    <location>
        <begin position="2143"/>
        <end position="2159"/>
    </location>
</feature>
<feature type="disulfide bond" evidence="3">
    <location>
        <begin position="2161"/>
        <end position="2170"/>
    </location>
</feature>
<feature type="disulfide bond" evidence="4">
    <location>
        <begin position="2339"/>
        <end position="2372"/>
    </location>
</feature>
<feature type="disulfide bond" evidence="3">
    <location>
        <begin position="2377"/>
        <end position="2388"/>
    </location>
</feature>
<feature type="disulfide bond" evidence="3">
    <location>
        <begin position="2382"/>
        <end position="2397"/>
    </location>
</feature>
<feature type="disulfide bond" evidence="3">
    <location>
        <begin position="2399"/>
        <end position="2408"/>
    </location>
</feature>
<feature type="disulfide bond" evidence="3">
    <location>
        <begin position="2415"/>
        <end position="2431"/>
    </location>
</feature>
<feature type="disulfide bond" evidence="3">
    <location>
        <begin position="2425"/>
        <end position="2440"/>
    </location>
</feature>
<feature type="disulfide bond" evidence="3">
    <location>
        <begin position="2442"/>
        <end position="2451"/>
    </location>
</feature>
<feature type="disulfide bond" evidence="3">
    <location>
        <begin position="2642"/>
        <end position="2653"/>
    </location>
</feature>
<feature type="disulfide bond" evidence="3">
    <location>
        <begin position="2647"/>
        <end position="2663"/>
    </location>
</feature>
<feature type="disulfide bond" evidence="3">
    <location>
        <begin position="2665"/>
        <end position="2674"/>
    </location>
</feature>
<feature type="disulfide bond" evidence="3">
    <location>
        <begin position="2680"/>
        <end position="2691"/>
    </location>
</feature>
<feature type="disulfide bond" evidence="3">
    <location>
        <begin position="2685"/>
        <end position="2702"/>
    </location>
</feature>
<feature type="disulfide bond" evidence="3">
    <location>
        <begin position="2704"/>
        <end position="2713"/>
    </location>
</feature>
<feature type="mutagenesis site" description="In rmc101; impaired visual function from an early age. Light-induced locomotor activity is significantly reduced. Morphology of the photoreceptor outer segment is impaired. Localization of rho (rhodopsin) and gnat2 to the photoreceptor outer segment and photoreceptor F-actin morphology is also disrupted." evidence="8">
    <location>
        <position position="1163"/>
    </location>
</feature>
<feature type="mutagenesis site" description="In del8; impaired visual function from an early age. Progressive degeneration of the retinal outer nuclear layer is detected from 2 months of age onwards, associated with increased apoptosis. Both rod and cone type photoreceptors show progressively reduced outer segment length. The photoreceptor outer segment proteins gnb3b and prph2 are mislocalized to the inner segment, and photoreceptor F-actin morphology is disrupted. Cone type photoreceptors also decline in number with age." evidence="7">
    <location>
        <position position="1860"/>
    </location>
</feature>